<sequence length="468" mass="51022">MNKGRVTQIMGPVVDVKFDGGKLPEIYNALTVKQSNENGSMNLTFEVALHLGDDTVRTVAMSSTDGLVRGTEVEDTGKAISVPVGDATLGRVFNVLGDAIDLDGELPADVHRDPIHRQAPAFEELSTKVEILETGIKVVDLLAPYIKGGKIGLFGGAGVGKTVLIQELINNIAQEHGGISVFAGVGERTREGNDLYHEMSDSGVIKKTAMVFGQMNEPPGARQRVALTGLTMAEHFRDEQGQDVLLFIDNIFRFTQAGSEVSALLGRMPSAVGYQPTLATEMGQLQERITSTNKGSITSIQAVYVPADDYTDPAPATTFAHLDATTNLERRLTQMGIYPAVDPLASTSRALSPEIVGEEHYEVARQVQQTLQRYKELQDIIAILGMDELSEEDKLVVHRARRIQFFLSQNFHVAEQFTGQKGSYVPVKNTVSGFKEILEGKYDDLPEDAFRLVGGIEEVIENAKKMMA</sequence>
<comment type="function">
    <text evidence="1">Produces ATP from ADP in the presence of a proton gradient across the membrane. The catalytic sites are hosted primarily by the beta subunits.</text>
</comment>
<comment type="catalytic activity">
    <reaction evidence="1">
        <text>ATP + H2O + 4 H(+)(in) = ADP + phosphate + 5 H(+)(out)</text>
        <dbReference type="Rhea" id="RHEA:57720"/>
        <dbReference type="ChEBI" id="CHEBI:15377"/>
        <dbReference type="ChEBI" id="CHEBI:15378"/>
        <dbReference type="ChEBI" id="CHEBI:30616"/>
        <dbReference type="ChEBI" id="CHEBI:43474"/>
        <dbReference type="ChEBI" id="CHEBI:456216"/>
        <dbReference type="EC" id="7.1.2.2"/>
    </reaction>
</comment>
<comment type="subunit">
    <text evidence="1">F-type ATPases have 2 components, CF(1) - the catalytic core - and CF(0) - the membrane proton channel. CF(1) has five subunits: alpha(3), beta(3), gamma(1), delta(1), epsilon(1). CF(0) has three main subunits: a(1), b(2) and c(9-12). The alpha and beta chains form an alternating ring which encloses part of the gamma chain. CF(1) is attached to CF(0) by a central stalk formed by the gamma and epsilon chains, while a peripheral stalk is formed by the delta and b chains.</text>
</comment>
<comment type="subcellular location">
    <subcellularLocation>
        <location evidence="1">Cell membrane</location>
        <topology evidence="1">Peripheral membrane protein</topology>
    </subcellularLocation>
</comment>
<comment type="similarity">
    <text evidence="1">Belongs to the ATPase alpha/beta chains family.</text>
</comment>
<reference key="1">
    <citation type="journal article" date="2003" name="Nature">
        <title>Genome sequence of Bacillus cereus and comparative analysis with Bacillus anthracis.</title>
        <authorList>
            <person name="Ivanova N."/>
            <person name="Sorokin A."/>
            <person name="Anderson I."/>
            <person name="Galleron N."/>
            <person name="Candelon B."/>
            <person name="Kapatral V."/>
            <person name="Bhattacharyya A."/>
            <person name="Reznik G."/>
            <person name="Mikhailova N."/>
            <person name="Lapidus A."/>
            <person name="Chu L."/>
            <person name="Mazur M."/>
            <person name="Goltsman E."/>
            <person name="Larsen N."/>
            <person name="D'Souza M."/>
            <person name="Walunas T."/>
            <person name="Grechkin Y."/>
            <person name="Pusch G."/>
            <person name="Haselkorn R."/>
            <person name="Fonstein M."/>
            <person name="Ehrlich S.D."/>
            <person name="Overbeek R."/>
            <person name="Kyrpides N.C."/>
        </authorList>
    </citation>
    <scope>NUCLEOTIDE SEQUENCE [LARGE SCALE GENOMIC DNA]</scope>
    <source>
        <strain>ATCC 14579 / DSM 31 / CCUG 7414 / JCM 2152 / NBRC 15305 / NCIMB 9373 / NCTC 2599 / NRRL B-3711</strain>
    </source>
</reference>
<keyword id="KW-0066">ATP synthesis</keyword>
<keyword id="KW-0067">ATP-binding</keyword>
<keyword id="KW-1003">Cell membrane</keyword>
<keyword id="KW-0139">CF(1)</keyword>
<keyword id="KW-0375">Hydrogen ion transport</keyword>
<keyword id="KW-0406">Ion transport</keyword>
<keyword id="KW-0472">Membrane</keyword>
<keyword id="KW-0547">Nucleotide-binding</keyword>
<keyword id="KW-1185">Reference proteome</keyword>
<keyword id="KW-1278">Translocase</keyword>
<keyword id="KW-0813">Transport</keyword>
<proteinExistence type="inferred from homology"/>
<evidence type="ECO:0000255" key="1">
    <source>
        <dbReference type="HAMAP-Rule" id="MF_01347"/>
    </source>
</evidence>
<protein>
    <recommendedName>
        <fullName evidence="1">ATP synthase subunit beta</fullName>
        <ecNumber evidence="1">7.1.2.2</ecNumber>
    </recommendedName>
    <alternativeName>
        <fullName evidence="1">ATP synthase F1 sector subunit beta</fullName>
    </alternativeName>
    <alternativeName>
        <fullName evidence="1">F-ATPase subunit beta</fullName>
    </alternativeName>
</protein>
<accession>Q814W2</accession>
<dbReference type="EC" id="7.1.2.2" evidence="1"/>
<dbReference type="EMBL" id="AE016877">
    <property type="protein sequence ID" value="AAP12169.1"/>
    <property type="molecule type" value="Genomic_DNA"/>
</dbReference>
<dbReference type="RefSeq" id="NP_834968.1">
    <property type="nucleotide sequence ID" value="NC_004722.1"/>
</dbReference>
<dbReference type="RefSeq" id="WP_001032595.1">
    <property type="nucleotide sequence ID" value="NZ_CP138336.1"/>
</dbReference>
<dbReference type="SMR" id="Q814W2"/>
<dbReference type="STRING" id="226900.BC_5306"/>
<dbReference type="MetOSite" id="Q814W2"/>
<dbReference type="GeneID" id="93005818"/>
<dbReference type="KEGG" id="bce:BC5306"/>
<dbReference type="PATRIC" id="fig|226900.8.peg.5478"/>
<dbReference type="HOGENOM" id="CLU_022398_0_2_9"/>
<dbReference type="OrthoDB" id="9801639at2"/>
<dbReference type="Proteomes" id="UP000001417">
    <property type="component" value="Chromosome"/>
</dbReference>
<dbReference type="GO" id="GO:0005886">
    <property type="term" value="C:plasma membrane"/>
    <property type="evidence" value="ECO:0007669"/>
    <property type="project" value="UniProtKB-SubCell"/>
</dbReference>
<dbReference type="GO" id="GO:0045259">
    <property type="term" value="C:proton-transporting ATP synthase complex"/>
    <property type="evidence" value="ECO:0007669"/>
    <property type="project" value="UniProtKB-KW"/>
</dbReference>
<dbReference type="GO" id="GO:0005524">
    <property type="term" value="F:ATP binding"/>
    <property type="evidence" value="ECO:0007669"/>
    <property type="project" value="UniProtKB-UniRule"/>
</dbReference>
<dbReference type="GO" id="GO:0016887">
    <property type="term" value="F:ATP hydrolysis activity"/>
    <property type="evidence" value="ECO:0007669"/>
    <property type="project" value="InterPro"/>
</dbReference>
<dbReference type="GO" id="GO:0046933">
    <property type="term" value="F:proton-transporting ATP synthase activity, rotational mechanism"/>
    <property type="evidence" value="ECO:0007669"/>
    <property type="project" value="UniProtKB-UniRule"/>
</dbReference>
<dbReference type="CDD" id="cd18110">
    <property type="entry name" value="ATP-synt_F1_beta_C"/>
    <property type="match status" value="1"/>
</dbReference>
<dbReference type="CDD" id="cd18115">
    <property type="entry name" value="ATP-synt_F1_beta_N"/>
    <property type="match status" value="1"/>
</dbReference>
<dbReference type="CDD" id="cd01133">
    <property type="entry name" value="F1-ATPase_beta_CD"/>
    <property type="match status" value="1"/>
</dbReference>
<dbReference type="FunFam" id="1.10.1140.10:FF:000001">
    <property type="entry name" value="ATP synthase subunit beta"/>
    <property type="match status" value="1"/>
</dbReference>
<dbReference type="FunFam" id="2.40.10.170:FF:000005">
    <property type="entry name" value="ATP synthase subunit beta"/>
    <property type="match status" value="1"/>
</dbReference>
<dbReference type="FunFam" id="3.40.50.300:FF:000004">
    <property type="entry name" value="ATP synthase subunit beta"/>
    <property type="match status" value="1"/>
</dbReference>
<dbReference type="Gene3D" id="2.40.10.170">
    <property type="match status" value="1"/>
</dbReference>
<dbReference type="Gene3D" id="1.10.1140.10">
    <property type="entry name" value="Bovine Mitochondrial F1-atpase, Atp Synthase Beta Chain, Chain D, domain 3"/>
    <property type="match status" value="1"/>
</dbReference>
<dbReference type="Gene3D" id="3.40.50.300">
    <property type="entry name" value="P-loop containing nucleotide triphosphate hydrolases"/>
    <property type="match status" value="1"/>
</dbReference>
<dbReference type="HAMAP" id="MF_01347">
    <property type="entry name" value="ATP_synth_beta_bact"/>
    <property type="match status" value="1"/>
</dbReference>
<dbReference type="InterPro" id="IPR003593">
    <property type="entry name" value="AAA+_ATPase"/>
</dbReference>
<dbReference type="InterPro" id="IPR055190">
    <property type="entry name" value="ATP-synt_VA_C"/>
</dbReference>
<dbReference type="InterPro" id="IPR005722">
    <property type="entry name" value="ATP_synth_F1_bsu"/>
</dbReference>
<dbReference type="InterPro" id="IPR020003">
    <property type="entry name" value="ATPase_a/bsu_AS"/>
</dbReference>
<dbReference type="InterPro" id="IPR050053">
    <property type="entry name" value="ATPase_alpha/beta_chains"/>
</dbReference>
<dbReference type="InterPro" id="IPR004100">
    <property type="entry name" value="ATPase_F1/V1/A1_a/bsu_N"/>
</dbReference>
<dbReference type="InterPro" id="IPR036121">
    <property type="entry name" value="ATPase_F1/V1/A1_a/bsu_N_sf"/>
</dbReference>
<dbReference type="InterPro" id="IPR000194">
    <property type="entry name" value="ATPase_F1/V1/A1_a/bsu_nucl-bd"/>
</dbReference>
<dbReference type="InterPro" id="IPR024034">
    <property type="entry name" value="ATPase_F1/V1_b/a_C"/>
</dbReference>
<dbReference type="InterPro" id="IPR027417">
    <property type="entry name" value="P-loop_NTPase"/>
</dbReference>
<dbReference type="NCBIfam" id="TIGR01039">
    <property type="entry name" value="atpD"/>
    <property type="match status" value="1"/>
</dbReference>
<dbReference type="PANTHER" id="PTHR15184">
    <property type="entry name" value="ATP SYNTHASE"/>
    <property type="match status" value="1"/>
</dbReference>
<dbReference type="PANTHER" id="PTHR15184:SF71">
    <property type="entry name" value="ATP SYNTHASE SUBUNIT BETA, MITOCHONDRIAL"/>
    <property type="match status" value="1"/>
</dbReference>
<dbReference type="Pfam" id="PF00006">
    <property type="entry name" value="ATP-synt_ab"/>
    <property type="match status" value="1"/>
</dbReference>
<dbReference type="Pfam" id="PF02874">
    <property type="entry name" value="ATP-synt_ab_N"/>
    <property type="match status" value="1"/>
</dbReference>
<dbReference type="Pfam" id="PF22919">
    <property type="entry name" value="ATP-synt_VA_C"/>
    <property type="match status" value="1"/>
</dbReference>
<dbReference type="SMART" id="SM00382">
    <property type="entry name" value="AAA"/>
    <property type="match status" value="1"/>
</dbReference>
<dbReference type="SUPFAM" id="SSF47917">
    <property type="entry name" value="C-terminal domain of alpha and beta subunits of F1 ATP synthase"/>
    <property type="match status" value="1"/>
</dbReference>
<dbReference type="SUPFAM" id="SSF50615">
    <property type="entry name" value="N-terminal domain of alpha and beta subunits of F1 ATP synthase"/>
    <property type="match status" value="1"/>
</dbReference>
<dbReference type="SUPFAM" id="SSF52540">
    <property type="entry name" value="P-loop containing nucleoside triphosphate hydrolases"/>
    <property type="match status" value="1"/>
</dbReference>
<dbReference type="PROSITE" id="PS00152">
    <property type="entry name" value="ATPASE_ALPHA_BETA"/>
    <property type="match status" value="1"/>
</dbReference>
<organism>
    <name type="scientific">Bacillus cereus (strain ATCC 14579 / DSM 31 / CCUG 7414 / JCM 2152 / NBRC 15305 / NCIMB 9373 / NCTC 2599 / NRRL B-3711)</name>
    <dbReference type="NCBI Taxonomy" id="226900"/>
    <lineage>
        <taxon>Bacteria</taxon>
        <taxon>Bacillati</taxon>
        <taxon>Bacillota</taxon>
        <taxon>Bacilli</taxon>
        <taxon>Bacillales</taxon>
        <taxon>Bacillaceae</taxon>
        <taxon>Bacillus</taxon>
        <taxon>Bacillus cereus group</taxon>
    </lineage>
</organism>
<gene>
    <name evidence="1" type="primary">atpD</name>
    <name type="ordered locus">BC_5306</name>
</gene>
<feature type="chain" id="PRO_0000254207" description="ATP synthase subunit beta">
    <location>
        <begin position="1"/>
        <end position="468"/>
    </location>
</feature>
<feature type="binding site" evidence="1">
    <location>
        <begin position="155"/>
        <end position="162"/>
    </location>
    <ligand>
        <name>ATP</name>
        <dbReference type="ChEBI" id="CHEBI:30616"/>
    </ligand>
</feature>
<name>ATPB_BACCR</name>